<organism>
    <name type="scientific">Vesicomyosocius okutanii subsp. Calyptogena okutanii (strain HA)</name>
    <dbReference type="NCBI Taxonomy" id="412965"/>
    <lineage>
        <taxon>Bacteria</taxon>
        <taxon>Pseudomonadati</taxon>
        <taxon>Pseudomonadota</taxon>
        <taxon>Gammaproteobacteria</taxon>
        <taxon>Candidatus Pseudothioglobaceae</taxon>
        <taxon>Candidatus Vesicomyosocius</taxon>
    </lineage>
</organism>
<name>FOLD_VESOH</name>
<keyword id="KW-0028">Amino-acid biosynthesis</keyword>
<keyword id="KW-0368">Histidine biosynthesis</keyword>
<keyword id="KW-0378">Hydrolase</keyword>
<keyword id="KW-0486">Methionine biosynthesis</keyword>
<keyword id="KW-0511">Multifunctional enzyme</keyword>
<keyword id="KW-0521">NADP</keyword>
<keyword id="KW-0554">One-carbon metabolism</keyword>
<keyword id="KW-0560">Oxidoreductase</keyword>
<keyword id="KW-0658">Purine biosynthesis</keyword>
<keyword id="KW-1185">Reference proteome</keyword>
<accession>A5CVZ6</accession>
<evidence type="ECO:0000255" key="1">
    <source>
        <dbReference type="HAMAP-Rule" id="MF_01576"/>
    </source>
</evidence>
<sequence length="277" mass="30244">MNVINGKKIAQNLQASIKLKVDTLDRKPGLAVILVGDDDASEVYIRNKEDACKEVGFYLEIINRFDNISQEELLFEIERLNHDDKIDGILVQLPLPKHLDVNLVIETISPKKDVDGFHSENIGKLMQNKPFLHPCTPKGVMLMLESIEIDLVGKNCVVVGASNIVGRPMACELLNAKATVTICNSKTKNLSCKLIQADIVVVAVGIPKMIQSDWIKPGAIVIDVGINRLDNGCLVGDVDFESVRKVAGWIAPVPGGVGPMTIATLLKNTLTAYEARI</sequence>
<gene>
    <name evidence="1" type="primary">folD</name>
    <name type="ordered locus">COSY_0765</name>
</gene>
<reference key="1">
    <citation type="journal article" date="2007" name="Curr. Biol.">
        <title>Reduced genome of the thioautotrophic intracellular symbiont in a deep-sea clam, Calyptogena okutanii.</title>
        <authorList>
            <person name="Kuwahara H."/>
            <person name="Yoshida T."/>
            <person name="Takaki Y."/>
            <person name="Shimamura S."/>
            <person name="Nishi S."/>
            <person name="Harada M."/>
            <person name="Matsuyama K."/>
            <person name="Takishita K."/>
            <person name="Kawato M."/>
            <person name="Uematsu K."/>
            <person name="Fujiwara Y."/>
            <person name="Sato T."/>
            <person name="Kato C."/>
            <person name="Kitagawa M."/>
            <person name="Kato I."/>
            <person name="Maruyama T."/>
        </authorList>
    </citation>
    <scope>NUCLEOTIDE SEQUENCE [LARGE SCALE GENOMIC DNA]</scope>
    <source>
        <strain>HA</strain>
    </source>
</reference>
<proteinExistence type="inferred from homology"/>
<comment type="function">
    <text evidence="1">Catalyzes the oxidation of 5,10-methylenetetrahydrofolate to 5,10-methenyltetrahydrofolate and then the hydrolysis of 5,10-methenyltetrahydrofolate to 10-formyltetrahydrofolate.</text>
</comment>
<comment type="catalytic activity">
    <reaction evidence="1">
        <text>(6R)-5,10-methylene-5,6,7,8-tetrahydrofolate + NADP(+) = (6R)-5,10-methenyltetrahydrofolate + NADPH</text>
        <dbReference type="Rhea" id="RHEA:22812"/>
        <dbReference type="ChEBI" id="CHEBI:15636"/>
        <dbReference type="ChEBI" id="CHEBI:57455"/>
        <dbReference type="ChEBI" id="CHEBI:57783"/>
        <dbReference type="ChEBI" id="CHEBI:58349"/>
        <dbReference type="EC" id="1.5.1.5"/>
    </reaction>
</comment>
<comment type="catalytic activity">
    <reaction evidence="1">
        <text>(6R)-5,10-methenyltetrahydrofolate + H2O = (6R)-10-formyltetrahydrofolate + H(+)</text>
        <dbReference type="Rhea" id="RHEA:23700"/>
        <dbReference type="ChEBI" id="CHEBI:15377"/>
        <dbReference type="ChEBI" id="CHEBI:15378"/>
        <dbReference type="ChEBI" id="CHEBI:57455"/>
        <dbReference type="ChEBI" id="CHEBI:195366"/>
        <dbReference type="EC" id="3.5.4.9"/>
    </reaction>
</comment>
<comment type="pathway">
    <text evidence="1">One-carbon metabolism; tetrahydrofolate interconversion.</text>
</comment>
<comment type="subunit">
    <text evidence="1">Homodimer.</text>
</comment>
<comment type="similarity">
    <text evidence="1">Belongs to the tetrahydrofolate dehydrogenase/cyclohydrolase family.</text>
</comment>
<dbReference type="EC" id="1.5.1.5" evidence="1"/>
<dbReference type="EC" id="3.5.4.9" evidence="1"/>
<dbReference type="EMBL" id="AP009247">
    <property type="protein sequence ID" value="BAF61872.1"/>
    <property type="molecule type" value="Genomic_DNA"/>
</dbReference>
<dbReference type="RefSeq" id="WP_011930141.1">
    <property type="nucleotide sequence ID" value="NC_009465.1"/>
</dbReference>
<dbReference type="SMR" id="A5CVZ6"/>
<dbReference type="STRING" id="412965.COSY_0765"/>
<dbReference type="KEGG" id="vok:COSY_0765"/>
<dbReference type="eggNOG" id="COG0190">
    <property type="taxonomic scope" value="Bacteria"/>
</dbReference>
<dbReference type="HOGENOM" id="CLU_034045_2_1_6"/>
<dbReference type="OrthoDB" id="9803580at2"/>
<dbReference type="UniPathway" id="UPA00193"/>
<dbReference type="Proteomes" id="UP000000247">
    <property type="component" value="Chromosome"/>
</dbReference>
<dbReference type="GO" id="GO:0005829">
    <property type="term" value="C:cytosol"/>
    <property type="evidence" value="ECO:0007669"/>
    <property type="project" value="TreeGrafter"/>
</dbReference>
<dbReference type="GO" id="GO:0004477">
    <property type="term" value="F:methenyltetrahydrofolate cyclohydrolase activity"/>
    <property type="evidence" value="ECO:0007669"/>
    <property type="project" value="UniProtKB-UniRule"/>
</dbReference>
<dbReference type="GO" id="GO:0004488">
    <property type="term" value="F:methylenetetrahydrofolate dehydrogenase (NADP+) activity"/>
    <property type="evidence" value="ECO:0007669"/>
    <property type="project" value="UniProtKB-UniRule"/>
</dbReference>
<dbReference type="GO" id="GO:0000105">
    <property type="term" value="P:L-histidine biosynthetic process"/>
    <property type="evidence" value="ECO:0007669"/>
    <property type="project" value="UniProtKB-KW"/>
</dbReference>
<dbReference type="GO" id="GO:0009086">
    <property type="term" value="P:methionine biosynthetic process"/>
    <property type="evidence" value="ECO:0007669"/>
    <property type="project" value="UniProtKB-KW"/>
</dbReference>
<dbReference type="GO" id="GO:0006164">
    <property type="term" value="P:purine nucleotide biosynthetic process"/>
    <property type="evidence" value="ECO:0007669"/>
    <property type="project" value="UniProtKB-KW"/>
</dbReference>
<dbReference type="GO" id="GO:0035999">
    <property type="term" value="P:tetrahydrofolate interconversion"/>
    <property type="evidence" value="ECO:0007669"/>
    <property type="project" value="UniProtKB-UniRule"/>
</dbReference>
<dbReference type="CDD" id="cd01080">
    <property type="entry name" value="NAD_bind_m-THF_DH_Cyclohyd"/>
    <property type="match status" value="1"/>
</dbReference>
<dbReference type="FunFam" id="3.40.50.720:FF:000094">
    <property type="entry name" value="Bifunctional protein FolD"/>
    <property type="match status" value="1"/>
</dbReference>
<dbReference type="FunFam" id="3.40.50.10860:FF:000005">
    <property type="entry name" value="C-1-tetrahydrofolate synthase, cytoplasmic, putative"/>
    <property type="match status" value="1"/>
</dbReference>
<dbReference type="Gene3D" id="3.40.50.10860">
    <property type="entry name" value="Leucine Dehydrogenase, chain A, domain 1"/>
    <property type="match status" value="1"/>
</dbReference>
<dbReference type="Gene3D" id="3.40.50.720">
    <property type="entry name" value="NAD(P)-binding Rossmann-like Domain"/>
    <property type="match status" value="1"/>
</dbReference>
<dbReference type="HAMAP" id="MF_01576">
    <property type="entry name" value="THF_DHG_CYH"/>
    <property type="match status" value="1"/>
</dbReference>
<dbReference type="InterPro" id="IPR046346">
    <property type="entry name" value="Aminoacid_DH-like_N_sf"/>
</dbReference>
<dbReference type="InterPro" id="IPR036291">
    <property type="entry name" value="NAD(P)-bd_dom_sf"/>
</dbReference>
<dbReference type="InterPro" id="IPR000672">
    <property type="entry name" value="THF_DH/CycHdrlase"/>
</dbReference>
<dbReference type="InterPro" id="IPR020630">
    <property type="entry name" value="THF_DH/CycHdrlase_cat_dom"/>
</dbReference>
<dbReference type="InterPro" id="IPR020867">
    <property type="entry name" value="THF_DH/CycHdrlase_CS"/>
</dbReference>
<dbReference type="InterPro" id="IPR020631">
    <property type="entry name" value="THF_DH/CycHdrlase_NAD-bd_dom"/>
</dbReference>
<dbReference type="NCBIfam" id="NF008058">
    <property type="entry name" value="PRK10792.1"/>
    <property type="match status" value="1"/>
</dbReference>
<dbReference type="PANTHER" id="PTHR48099:SF5">
    <property type="entry name" value="C-1-TETRAHYDROFOLATE SYNTHASE, CYTOPLASMIC"/>
    <property type="match status" value="1"/>
</dbReference>
<dbReference type="PANTHER" id="PTHR48099">
    <property type="entry name" value="C-1-TETRAHYDROFOLATE SYNTHASE, CYTOPLASMIC-RELATED"/>
    <property type="match status" value="1"/>
</dbReference>
<dbReference type="Pfam" id="PF00763">
    <property type="entry name" value="THF_DHG_CYH"/>
    <property type="match status" value="1"/>
</dbReference>
<dbReference type="Pfam" id="PF02882">
    <property type="entry name" value="THF_DHG_CYH_C"/>
    <property type="match status" value="1"/>
</dbReference>
<dbReference type="PRINTS" id="PR00085">
    <property type="entry name" value="THFDHDRGNASE"/>
</dbReference>
<dbReference type="SUPFAM" id="SSF53223">
    <property type="entry name" value="Aminoacid dehydrogenase-like, N-terminal domain"/>
    <property type="match status" value="1"/>
</dbReference>
<dbReference type="SUPFAM" id="SSF51735">
    <property type="entry name" value="NAD(P)-binding Rossmann-fold domains"/>
    <property type="match status" value="1"/>
</dbReference>
<dbReference type="PROSITE" id="PS00766">
    <property type="entry name" value="THF_DHG_CYH_1"/>
    <property type="match status" value="1"/>
</dbReference>
<dbReference type="PROSITE" id="PS00767">
    <property type="entry name" value="THF_DHG_CYH_2"/>
    <property type="match status" value="1"/>
</dbReference>
<protein>
    <recommendedName>
        <fullName evidence="1">Bifunctional protein FolD</fullName>
    </recommendedName>
    <domain>
        <recommendedName>
            <fullName evidence="1">Methylenetetrahydrofolate dehydrogenase</fullName>
            <ecNumber evidence="1">1.5.1.5</ecNumber>
        </recommendedName>
    </domain>
    <domain>
        <recommendedName>
            <fullName evidence="1">Methenyltetrahydrofolate cyclohydrolase</fullName>
            <ecNumber evidence="1">3.5.4.9</ecNumber>
        </recommendedName>
    </domain>
</protein>
<feature type="chain" id="PRO_0000305893" description="Bifunctional protein FolD">
    <location>
        <begin position="1"/>
        <end position="277"/>
    </location>
</feature>
<feature type="binding site" evidence="1">
    <location>
        <begin position="160"/>
        <end position="162"/>
    </location>
    <ligand>
        <name>NADP(+)</name>
        <dbReference type="ChEBI" id="CHEBI:58349"/>
    </ligand>
</feature>
<feature type="binding site" evidence="1">
    <location>
        <position position="185"/>
    </location>
    <ligand>
        <name>NADP(+)</name>
        <dbReference type="ChEBI" id="CHEBI:58349"/>
    </ligand>
</feature>
<feature type="binding site" evidence="1">
    <location>
        <position position="226"/>
    </location>
    <ligand>
        <name>NADP(+)</name>
        <dbReference type="ChEBI" id="CHEBI:58349"/>
    </ligand>
</feature>